<proteinExistence type="inferred from homology"/>
<organism evidence="8">
    <name type="scientific">Ixodes ricinus</name>
    <name type="common">Common tick</name>
    <name type="synonym">Acarus ricinus</name>
    <dbReference type="NCBI Taxonomy" id="34613"/>
    <lineage>
        <taxon>Eukaryota</taxon>
        <taxon>Metazoa</taxon>
        <taxon>Ecdysozoa</taxon>
        <taxon>Arthropoda</taxon>
        <taxon>Chelicerata</taxon>
        <taxon>Arachnida</taxon>
        <taxon>Acari</taxon>
        <taxon>Parasitiformes</taxon>
        <taxon>Ixodida</taxon>
        <taxon>Ixodoidea</taxon>
        <taxon>Ixodidae</taxon>
        <taxon>Ixodinae</taxon>
        <taxon>Ixodes</taxon>
    </lineage>
</organism>
<keyword id="KW-1015">Disulfide bond</keyword>
<keyword id="KW-0325">Glycoprotein</keyword>
<keyword id="KW-0964">Secreted</keyword>
<keyword id="KW-0732">Signal</keyword>
<sequence>MELNAFTILHIAVFIAVGYYANTHTTVTGSVEGKPNNPNEDIEVSYCRMNCTVENGVSSACSGDCVCVHRDNEPNGICVEITYFGDFGDPSQDPSIDEAAPRESVSKRRSNGES</sequence>
<accession>A0A0K8RKE4</accession>
<reference evidence="8" key="1">
    <citation type="journal article" date="2013" name="FASEB J.">
        <title>De novo Ixodes ricinus salivary gland transcriptome analysis using two next-generation sequencing methodologies.</title>
        <authorList>
            <person name="Schwarz A."/>
            <person name="von Reumont B.M."/>
            <person name="Erhart J."/>
            <person name="Chagas A.C."/>
            <person name="Ribeiro J.M."/>
            <person name="Kotsyfakis M."/>
        </authorList>
    </citation>
    <scope>NUCLEOTIDE SEQUENCE [LARGE SCALE MRNA]</scope>
    <source>
        <tissue evidence="8">Salivary gland</tissue>
    </source>
</reference>
<reference evidence="7" key="2">
    <citation type="journal article" date="2019" name="J. Biol. Chem.">
        <title>A knottin scaffold directs the CXC-chemokine-binding specificity of tick evasins.</title>
        <authorList>
            <person name="Lee A.W."/>
            <person name="Deruaz M."/>
            <person name="Lynch C."/>
            <person name="Davies G."/>
            <person name="Singh K."/>
            <person name="Alenazi Y."/>
            <person name="Eaton J.R.O."/>
            <person name="Kawamura A."/>
            <person name="Shaw J."/>
            <person name="Proudfoot A.E.I."/>
            <person name="Dias J.M."/>
            <person name="Bhattacharya S."/>
        </authorList>
    </citation>
    <scope>FUNCTION</scope>
</reference>
<protein>
    <recommendedName>
        <fullName evidence="6">Evasin P1096</fullName>
    </recommendedName>
</protein>
<name>E1096_IXORI</name>
<comment type="function">
    <text evidence="5">Salivary chemokine-binding protein which binds to host chemokine CXCL8.</text>
</comment>
<comment type="subcellular location">
    <subcellularLocation>
        <location evidence="7">Secreted</location>
    </subcellularLocation>
</comment>
<evidence type="ECO:0000250" key="1">
    <source>
        <dbReference type="UniProtKB" id="P0C8E8"/>
    </source>
</evidence>
<evidence type="ECO:0000255" key="2"/>
<evidence type="ECO:0000255" key="3">
    <source>
        <dbReference type="PROSITE-ProRule" id="PRU00498"/>
    </source>
</evidence>
<evidence type="ECO:0000256" key="4">
    <source>
        <dbReference type="SAM" id="MobiDB-lite"/>
    </source>
</evidence>
<evidence type="ECO:0000269" key="5">
    <source>
    </source>
</evidence>
<evidence type="ECO:0000303" key="6">
    <source>
    </source>
</evidence>
<evidence type="ECO:0000305" key="7"/>
<evidence type="ECO:0000312" key="8">
    <source>
        <dbReference type="EMBL" id="JAA71014.1"/>
    </source>
</evidence>
<dbReference type="EMBL" id="GADI01002794">
    <property type="protein sequence ID" value="JAA71014.1"/>
    <property type="molecule type" value="mRNA"/>
</dbReference>
<dbReference type="GO" id="GO:0005576">
    <property type="term" value="C:extracellular region"/>
    <property type="evidence" value="ECO:0007669"/>
    <property type="project" value="UniProtKB-SubCell"/>
</dbReference>
<dbReference type="GO" id="GO:0019958">
    <property type="term" value="F:C-X-C chemokine binding"/>
    <property type="evidence" value="ECO:0000314"/>
    <property type="project" value="UniProtKB"/>
</dbReference>
<feature type="signal peptide" evidence="2">
    <location>
        <begin position="1"/>
        <end position="23"/>
    </location>
</feature>
<feature type="chain" id="PRO_5005518445" description="Evasin P1096" evidence="2">
    <location>
        <begin position="24"/>
        <end position="114"/>
    </location>
</feature>
<feature type="region of interest" description="Disordered" evidence="4">
    <location>
        <begin position="89"/>
        <end position="114"/>
    </location>
</feature>
<feature type="compositionally biased region" description="Basic and acidic residues" evidence="4">
    <location>
        <begin position="99"/>
        <end position="114"/>
    </location>
</feature>
<feature type="glycosylation site" description="N-linked (GlcNAc...) asparagine" evidence="3">
    <location>
        <position position="50"/>
    </location>
</feature>
<feature type="disulfide bond" evidence="1">
    <location>
        <begin position="47"/>
        <end position="65"/>
    </location>
</feature>
<feature type="disulfide bond" evidence="1">
    <location>
        <begin position="51"/>
        <end position="67"/>
    </location>
</feature>
<feature type="disulfide bond" evidence="1">
    <location>
        <begin position="61"/>
        <end position="78"/>
    </location>
</feature>